<name>17KD_RICAM</name>
<keyword id="KW-0998">Cell outer membrane</keyword>
<keyword id="KW-0449">Lipoprotein</keyword>
<keyword id="KW-0472">Membrane</keyword>
<keyword id="KW-0564">Palmitate</keyword>
<keyword id="KW-0732">Signal</keyword>
<evidence type="ECO:0000255" key="1">
    <source>
        <dbReference type="PROSITE-ProRule" id="PRU00303"/>
    </source>
</evidence>
<evidence type="ECO:0000305" key="2"/>
<sequence length="154" mass="15879">MKLLSKIMIIALAASTLQACNGPGGMNKQGTGTLLGGAGGALLGSQFGKGKGQLVGVGVGALLGAVLGGQVGAGMDEQDRRIAELTSQKALETAPNGSNVEWRNPDNGNYGYVTPNKTYRNSTGQYCREYTQTVVIGGKQQKAYGNACRQPDGQ</sequence>
<proteinExistence type="inferred from homology"/>
<feature type="signal peptide" evidence="1">
    <location>
        <begin position="1"/>
        <end position="19"/>
    </location>
</feature>
<feature type="chain" id="PRO_0000018014" description="17 kDa surface antigen">
    <location>
        <begin position="20"/>
        <end position="154" status="greater than"/>
    </location>
</feature>
<feature type="lipid moiety-binding region" description="N-palmitoyl cysteine" evidence="2">
    <location>
        <position position="20"/>
    </location>
</feature>
<feature type="lipid moiety-binding region" description="S-diacylglycerol cysteine" evidence="2">
    <location>
        <position position="20"/>
    </location>
</feature>
<feature type="non-terminal residue">
    <location>
        <position position="154"/>
    </location>
</feature>
<gene>
    <name type="primary">omp</name>
</gene>
<reference key="1">
    <citation type="submission" date="1995-01" db="EMBL/GenBank/DDBJ databases">
        <title>Rickettsia amblyommii, sp. nov., isolated from the Lone Star tick, Amblyomma americanum (Ixodidae).</title>
        <authorList>
            <person name="Stothard D.R."/>
            <person name="Ralph D.A."/>
            <person name="Clark J.B."/>
            <person name="Fuerst P.A."/>
            <person name="Pretzman C."/>
        </authorList>
    </citation>
    <scope>NUCLEOTIDE SEQUENCE [GENOMIC DNA]</scope>
    <source>
        <strain>MO 85-1084</strain>
    </source>
</reference>
<comment type="subcellular location">
    <subcellularLocation>
        <location evidence="2">Cell outer membrane</location>
        <topology evidence="2">Lipid-anchor</topology>
    </subcellularLocation>
</comment>
<comment type="similarity">
    <text evidence="2">Belongs to the rickettsiale 17 kDa surface antigen family.</text>
</comment>
<dbReference type="EMBL" id="U11013">
    <property type="protein sequence ID" value="AAB07704.1"/>
    <property type="molecule type" value="Genomic_DNA"/>
</dbReference>
<dbReference type="GO" id="GO:0009279">
    <property type="term" value="C:cell outer membrane"/>
    <property type="evidence" value="ECO:0007669"/>
    <property type="project" value="UniProtKB-SubCell"/>
</dbReference>
<dbReference type="InterPro" id="IPR032635">
    <property type="entry name" value="Anti_2"/>
</dbReference>
<dbReference type="InterPro" id="IPR008816">
    <property type="entry name" value="Gly_zipper_2TM_dom"/>
</dbReference>
<dbReference type="InterPro" id="IPR016364">
    <property type="entry name" value="Surface_antigen_Rickettsia"/>
</dbReference>
<dbReference type="Pfam" id="PF16998">
    <property type="entry name" value="17kDa_Anti_2"/>
    <property type="match status" value="1"/>
</dbReference>
<dbReference type="Pfam" id="PF05433">
    <property type="entry name" value="Rick_17kDa_Anti"/>
    <property type="match status" value="1"/>
</dbReference>
<dbReference type="PIRSF" id="PIRSF002721">
    <property type="entry name" value="Surface_antigen_Rickettsia"/>
    <property type="match status" value="1"/>
</dbReference>
<dbReference type="PROSITE" id="PS51257">
    <property type="entry name" value="PROKAR_LIPOPROTEIN"/>
    <property type="match status" value="1"/>
</dbReference>
<organism>
    <name type="scientific">Rickettsia amblyommatis</name>
    <name type="common">Rickettsia amblyommii</name>
    <dbReference type="NCBI Taxonomy" id="33989"/>
    <lineage>
        <taxon>Bacteria</taxon>
        <taxon>Pseudomonadati</taxon>
        <taxon>Pseudomonadota</taxon>
        <taxon>Alphaproteobacteria</taxon>
        <taxon>Rickettsiales</taxon>
        <taxon>Rickettsiaceae</taxon>
        <taxon>Rickettsieae</taxon>
        <taxon>Rickettsia</taxon>
        <taxon>spotted fever group</taxon>
    </lineage>
</organism>
<protein>
    <recommendedName>
        <fullName>17 kDa surface antigen</fullName>
    </recommendedName>
</protein>
<accession>P50927</accession>